<reference key="1">
    <citation type="submission" date="2008-06" db="EMBL/GenBank/DDBJ databases">
        <title>Complete sequence of Chlorobaculum parvum NCIB 8327.</title>
        <authorList>
            <consortium name="US DOE Joint Genome Institute"/>
            <person name="Lucas S."/>
            <person name="Copeland A."/>
            <person name="Lapidus A."/>
            <person name="Glavina del Rio T."/>
            <person name="Dalin E."/>
            <person name="Tice H."/>
            <person name="Bruce D."/>
            <person name="Goodwin L."/>
            <person name="Pitluck S."/>
            <person name="Schmutz J."/>
            <person name="Larimer F."/>
            <person name="Land M."/>
            <person name="Hauser L."/>
            <person name="Kyrpides N."/>
            <person name="Mikhailova N."/>
            <person name="Zhao F."/>
            <person name="Li T."/>
            <person name="Liu Z."/>
            <person name="Overmann J."/>
            <person name="Bryant D.A."/>
            <person name="Richardson P."/>
        </authorList>
    </citation>
    <scope>NUCLEOTIDE SEQUENCE [LARGE SCALE GENOMIC DNA]</scope>
    <source>
        <strain>DSM 263 / NCIMB 8327</strain>
    </source>
</reference>
<proteinExistence type="inferred from homology"/>
<comment type="function">
    <text evidence="1">Acts as a chaperone.</text>
</comment>
<comment type="induction">
    <text evidence="1">By stress conditions e.g. heat shock.</text>
</comment>
<comment type="similarity">
    <text evidence="1">Belongs to the heat shock protein 70 family.</text>
</comment>
<name>DNAK_CHLP8</name>
<dbReference type="EMBL" id="CP001099">
    <property type="protein sequence ID" value="ACF11065.1"/>
    <property type="molecule type" value="Genomic_DNA"/>
</dbReference>
<dbReference type="RefSeq" id="WP_012501898.1">
    <property type="nucleotide sequence ID" value="NC_011027.1"/>
</dbReference>
<dbReference type="SMR" id="B3QMB2"/>
<dbReference type="STRING" id="517417.Cpar_0645"/>
<dbReference type="KEGG" id="cpc:Cpar_0645"/>
<dbReference type="eggNOG" id="COG0443">
    <property type="taxonomic scope" value="Bacteria"/>
</dbReference>
<dbReference type="HOGENOM" id="CLU_005965_2_1_10"/>
<dbReference type="OrthoDB" id="9766019at2"/>
<dbReference type="Proteomes" id="UP000008811">
    <property type="component" value="Chromosome"/>
</dbReference>
<dbReference type="GO" id="GO:0005524">
    <property type="term" value="F:ATP binding"/>
    <property type="evidence" value="ECO:0007669"/>
    <property type="project" value="UniProtKB-UniRule"/>
</dbReference>
<dbReference type="GO" id="GO:0140662">
    <property type="term" value="F:ATP-dependent protein folding chaperone"/>
    <property type="evidence" value="ECO:0007669"/>
    <property type="project" value="InterPro"/>
</dbReference>
<dbReference type="GO" id="GO:0051082">
    <property type="term" value="F:unfolded protein binding"/>
    <property type="evidence" value="ECO:0007669"/>
    <property type="project" value="InterPro"/>
</dbReference>
<dbReference type="CDD" id="cd10234">
    <property type="entry name" value="ASKHA_NBD_HSP70_DnaK-like"/>
    <property type="match status" value="1"/>
</dbReference>
<dbReference type="FunFam" id="2.60.34.10:FF:000014">
    <property type="entry name" value="Chaperone protein DnaK HSP70"/>
    <property type="match status" value="1"/>
</dbReference>
<dbReference type="FunFam" id="1.20.1270.10:FF:000001">
    <property type="entry name" value="Molecular chaperone DnaK"/>
    <property type="match status" value="1"/>
</dbReference>
<dbReference type="FunFam" id="3.30.420.40:FF:000004">
    <property type="entry name" value="Molecular chaperone DnaK"/>
    <property type="match status" value="1"/>
</dbReference>
<dbReference type="FunFam" id="3.90.640.10:FF:000003">
    <property type="entry name" value="Molecular chaperone DnaK"/>
    <property type="match status" value="1"/>
</dbReference>
<dbReference type="Gene3D" id="1.20.1270.10">
    <property type="match status" value="1"/>
</dbReference>
<dbReference type="Gene3D" id="3.30.420.40">
    <property type="match status" value="2"/>
</dbReference>
<dbReference type="Gene3D" id="3.90.640.10">
    <property type="entry name" value="Actin, Chain A, domain 4"/>
    <property type="match status" value="1"/>
</dbReference>
<dbReference type="Gene3D" id="2.60.34.10">
    <property type="entry name" value="Substrate Binding Domain Of DNAk, Chain A, domain 1"/>
    <property type="match status" value="1"/>
</dbReference>
<dbReference type="HAMAP" id="MF_00332">
    <property type="entry name" value="DnaK"/>
    <property type="match status" value="1"/>
</dbReference>
<dbReference type="InterPro" id="IPR043129">
    <property type="entry name" value="ATPase_NBD"/>
</dbReference>
<dbReference type="InterPro" id="IPR012725">
    <property type="entry name" value="Chaperone_DnaK"/>
</dbReference>
<dbReference type="InterPro" id="IPR018181">
    <property type="entry name" value="Heat_shock_70_CS"/>
</dbReference>
<dbReference type="InterPro" id="IPR029048">
    <property type="entry name" value="HSP70_C_sf"/>
</dbReference>
<dbReference type="InterPro" id="IPR029047">
    <property type="entry name" value="HSP70_peptide-bd_sf"/>
</dbReference>
<dbReference type="InterPro" id="IPR013126">
    <property type="entry name" value="Hsp_70_fam"/>
</dbReference>
<dbReference type="NCBIfam" id="NF001413">
    <property type="entry name" value="PRK00290.1"/>
    <property type="match status" value="1"/>
</dbReference>
<dbReference type="NCBIfam" id="NF003520">
    <property type="entry name" value="PRK05183.1"/>
    <property type="match status" value="1"/>
</dbReference>
<dbReference type="NCBIfam" id="TIGR02350">
    <property type="entry name" value="prok_dnaK"/>
    <property type="match status" value="1"/>
</dbReference>
<dbReference type="PANTHER" id="PTHR19375">
    <property type="entry name" value="HEAT SHOCK PROTEIN 70KDA"/>
    <property type="match status" value="1"/>
</dbReference>
<dbReference type="Pfam" id="PF00012">
    <property type="entry name" value="HSP70"/>
    <property type="match status" value="1"/>
</dbReference>
<dbReference type="PRINTS" id="PR00301">
    <property type="entry name" value="HEATSHOCK70"/>
</dbReference>
<dbReference type="SUPFAM" id="SSF53067">
    <property type="entry name" value="Actin-like ATPase domain"/>
    <property type="match status" value="2"/>
</dbReference>
<dbReference type="SUPFAM" id="SSF100934">
    <property type="entry name" value="Heat shock protein 70kD (HSP70), C-terminal subdomain"/>
    <property type="match status" value="1"/>
</dbReference>
<dbReference type="SUPFAM" id="SSF100920">
    <property type="entry name" value="Heat shock protein 70kD (HSP70), peptide-binding domain"/>
    <property type="match status" value="1"/>
</dbReference>
<dbReference type="PROSITE" id="PS00297">
    <property type="entry name" value="HSP70_1"/>
    <property type="match status" value="1"/>
</dbReference>
<dbReference type="PROSITE" id="PS00329">
    <property type="entry name" value="HSP70_2"/>
    <property type="match status" value="1"/>
</dbReference>
<dbReference type="PROSITE" id="PS01036">
    <property type="entry name" value="HSP70_3"/>
    <property type="match status" value="1"/>
</dbReference>
<feature type="chain" id="PRO_1000119685" description="Chaperone protein DnaK">
    <location>
        <begin position="1"/>
        <end position="638"/>
    </location>
</feature>
<feature type="region of interest" description="Disordered" evidence="2">
    <location>
        <begin position="592"/>
        <end position="638"/>
    </location>
</feature>
<feature type="compositionally biased region" description="Low complexity" evidence="2">
    <location>
        <begin position="597"/>
        <end position="610"/>
    </location>
</feature>
<feature type="compositionally biased region" description="Acidic residues" evidence="2">
    <location>
        <begin position="629"/>
        <end position="638"/>
    </location>
</feature>
<feature type="modified residue" description="Phosphothreonine; by autocatalysis" evidence="1">
    <location>
        <position position="196"/>
    </location>
</feature>
<sequence length="638" mass="69083">MGKIIGIDLGTTNSCVAVMQGTQPTVIENSEGYRTTPSMVAFTKTGERLIGQAAKRQAVTNPKNTIFSIKRFMGRKYDEVPNEKKFASYDVVNEGGDARVKIGEKSYSPQEISAMILQKMKQTAEDFLGEKVTEAVITVPAYFNDAQRQATKDAGKIAGLEVKRIINEPTAAALAYGLDKKKENEKVAVFDLGGGTFDISILELGDGVFEVKSTDGDTHLGGDDFDQVIIDYLADEFKKQEGIDLRKDAIALQRLKEAAEKAKIELSSRTDTEINLPFITATQEGPKHLVINLTRAKFEAMSATLFDKVLEPCRRALKNSKLDMKEIDEVVLVGGSSRIPKVQALVKEFFGKEPNKSVNPDEVVAIGAAIQGGVLQGDVTDVLLLDVTPLSLGIETLGGVMTKLIEANSTIPTRKQETFSTAADNQTSVEVHVLQGERPMASDNKTLGRFHLGDIPPAPRGIPQIEVTFDIDANGILNVSAKDKATGKEQSIKIEASGKLTEAEIEKMKEDAKAHADEDQKRKEEIDLKNSADSLIFSTEKQLSELGDKLPADKKAEIESALEKLKEAHKAGSADAIKPAMDELSKVWSEAASNLYQQPGAEAGAAPQPETNGQQESKGGDGAVNAEYEVIDGDDDKK</sequence>
<keyword id="KW-0067">ATP-binding</keyword>
<keyword id="KW-0143">Chaperone</keyword>
<keyword id="KW-0547">Nucleotide-binding</keyword>
<keyword id="KW-0597">Phosphoprotein</keyword>
<keyword id="KW-0346">Stress response</keyword>
<organism>
    <name type="scientific">Chlorobaculum parvum (strain DSM 263 / NCIMB 8327)</name>
    <name type="common">Chlorobium vibrioforme subsp. thiosulfatophilum</name>
    <dbReference type="NCBI Taxonomy" id="517417"/>
    <lineage>
        <taxon>Bacteria</taxon>
        <taxon>Pseudomonadati</taxon>
        <taxon>Chlorobiota</taxon>
        <taxon>Chlorobiia</taxon>
        <taxon>Chlorobiales</taxon>
        <taxon>Chlorobiaceae</taxon>
        <taxon>Chlorobaculum</taxon>
    </lineage>
</organism>
<evidence type="ECO:0000255" key="1">
    <source>
        <dbReference type="HAMAP-Rule" id="MF_00332"/>
    </source>
</evidence>
<evidence type="ECO:0000256" key="2">
    <source>
        <dbReference type="SAM" id="MobiDB-lite"/>
    </source>
</evidence>
<protein>
    <recommendedName>
        <fullName evidence="1">Chaperone protein DnaK</fullName>
    </recommendedName>
    <alternativeName>
        <fullName evidence="1">HSP70</fullName>
    </alternativeName>
    <alternativeName>
        <fullName evidence="1">Heat shock 70 kDa protein</fullName>
    </alternativeName>
    <alternativeName>
        <fullName evidence="1">Heat shock protein 70</fullName>
    </alternativeName>
</protein>
<accession>B3QMB2</accession>
<gene>
    <name evidence="1" type="primary">dnaK</name>
    <name type="ordered locus">Cpar_0645</name>
</gene>